<name>YHBQ_ECOL6</name>
<dbReference type="EMBL" id="AE014075">
    <property type="protein sequence ID" value="AAN82349.1"/>
    <property type="molecule type" value="Genomic_DNA"/>
</dbReference>
<dbReference type="RefSeq" id="WP_000189322.1">
    <property type="nucleotide sequence ID" value="NZ_CP051263.1"/>
</dbReference>
<dbReference type="SMR" id="Q8FD94"/>
<dbReference type="STRING" id="199310.c3908"/>
<dbReference type="KEGG" id="ecc:c3908"/>
<dbReference type="eggNOG" id="COG2827">
    <property type="taxonomic scope" value="Bacteria"/>
</dbReference>
<dbReference type="HOGENOM" id="CLU_135650_0_1_6"/>
<dbReference type="BioCyc" id="ECOL199310:C3908-MONOMER"/>
<dbReference type="Proteomes" id="UP000001410">
    <property type="component" value="Chromosome"/>
</dbReference>
<dbReference type="CDD" id="cd10456">
    <property type="entry name" value="GIY-YIG_UPF0213"/>
    <property type="match status" value="1"/>
</dbReference>
<dbReference type="FunFam" id="3.40.1440.10:FF:000002">
    <property type="entry name" value="UPF0213 protein YhbQ"/>
    <property type="match status" value="1"/>
</dbReference>
<dbReference type="Gene3D" id="3.40.1440.10">
    <property type="entry name" value="GIY-YIG endonuclease"/>
    <property type="match status" value="1"/>
</dbReference>
<dbReference type="HAMAP" id="MF_01029">
    <property type="entry name" value="UPF0213"/>
    <property type="match status" value="1"/>
</dbReference>
<dbReference type="InterPro" id="IPR000305">
    <property type="entry name" value="GIY-YIG_endonuc"/>
</dbReference>
<dbReference type="InterPro" id="IPR035901">
    <property type="entry name" value="GIY-YIG_endonuc_sf"/>
</dbReference>
<dbReference type="InterPro" id="IPR050190">
    <property type="entry name" value="UPF0213_domain"/>
</dbReference>
<dbReference type="InterPro" id="IPR022992">
    <property type="entry name" value="UPF0213_GIY-YIG_endonuc"/>
</dbReference>
<dbReference type="PANTHER" id="PTHR34477">
    <property type="entry name" value="UPF0213 PROTEIN YHBQ"/>
    <property type="match status" value="1"/>
</dbReference>
<dbReference type="PANTHER" id="PTHR34477:SF1">
    <property type="entry name" value="UPF0213 PROTEIN YHBQ"/>
    <property type="match status" value="1"/>
</dbReference>
<dbReference type="Pfam" id="PF01541">
    <property type="entry name" value="GIY-YIG"/>
    <property type="match status" value="1"/>
</dbReference>
<dbReference type="SMART" id="SM00465">
    <property type="entry name" value="GIYc"/>
    <property type="match status" value="1"/>
</dbReference>
<dbReference type="SUPFAM" id="SSF82771">
    <property type="entry name" value="GIY-YIG endonuclease"/>
    <property type="match status" value="1"/>
</dbReference>
<dbReference type="PROSITE" id="PS50164">
    <property type="entry name" value="GIY_YIG"/>
    <property type="match status" value="1"/>
</dbReference>
<organism>
    <name type="scientific">Escherichia coli O6:H1 (strain CFT073 / ATCC 700928 / UPEC)</name>
    <dbReference type="NCBI Taxonomy" id="199310"/>
    <lineage>
        <taxon>Bacteria</taxon>
        <taxon>Pseudomonadati</taxon>
        <taxon>Pseudomonadota</taxon>
        <taxon>Gammaproteobacteria</taxon>
        <taxon>Enterobacterales</taxon>
        <taxon>Enterobacteriaceae</taxon>
        <taxon>Escherichia</taxon>
    </lineage>
</organism>
<proteinExistence type="inferred from homology"/>
<evidence type="ECO:0000255" key="1">
    <source>
        <dbReference type="HAMAP-Rule" id="MF_01029"/>
    </source>
</evidence>
<feature type="chain" id="PRO_0000161360" description="UPF0213 protein YhbQ">
    <location>
        <begin position="1"/>
        <end position="100"/>
    </location>
</feature>
<feature type="domain" description="GIY-YIG" evidence="1">
    <location>
        <begin position="2"/>
        <end position="77"/>
    </location>
</feature>
<reference key="1">
    <citation type="journal article" date="2002" name="Proc. Natl. Acad. Sci. U.S.A.">
        <title>Extensive mosaic structure revealed by the complete genome sequence of uropathogenic Escherichia coli.</title>
        <authorList>
            <person name="Welch R.A."/>
            <person name="Burland V."/>
            <person name="Plunkett G. III"/>
            <person name="Redford P."/>
            <person name="Roesch P."/>
            <person name="Rasko D."/>
            <person name="Buckles E.L."/>
            <person name="Liou S.-R."/>
            <person name="Boutin A."/>
            <person name="Hackett J."/>
            <person name="Stroud D."/>
            <person name="Mayhew G.F."/>
            <person name="Rose D.J."/>
            <person name="Zhou S."/>
            <person name="Schwartz D.C."/>
            <person name="Perna N.T."/>
            <person name="Mobley H.L.T."/>
            <person name="Donnenberg M.S."/>
            <person name="Blattner F.R."/>
        </authorList>
    </citation>
    <scope>NUCLEOTIDE SEQUENCE [LARGE SCALE GENOMIC DNA]</scope>
    <source>
        <strain>CFT073 / ATCC 700928 / UPEC</strain>
    </source>
</reference>
<accession>Q8FD94</accession>
<comment type="similarity">
    <text evidence="1">Belongs to the UPF0213 family.</text>
</comment>
<keyword id="KW-1185">Reference proteome</keyword>
<sequence>MTPWFLYLIRTADNKLYTGITTDVERRYQQHQSGKGAKALRGKGELTLAFSAPVGDRSLALRAEYRVKQLTKRQKERLVAEGAVFAELLSSLQTPEIKSD</sequence>
<gene>
    <name evidence="1" type="primary">yhbQ</name>
    <name type="ordered locus">c3908</name>
</gene>
<protein>
    <recommendedName>
        <fullName evidence="1">UPF0213 protein YhbQ</fullName>
    </recommendedName>
</protein>